<reference evidence="8 9" key="1">
    <citation type="journal article" date="2002" name="Science">
        <title>Identification of a major gene regulating complex social behavior.</title>
        <authorList>
            <person name="Krieger M.J.B."/>
            <person name="Ross K.G."/>
        </authorList>
    </citation>
    <scope>NUCLEOTIDE SEQUENCE [GENOMIC DNA] (ALLELES B AND B')</scope>
    <scope>VARIANTS THR-39; GLY-42; ILE-95; ALA-136; ILE-139; ASN-148 AND ALA-152</scope>
</reference>
<reference evidence="8 10" key="2">
    <citation type="journal article" date="2005" name="Mol. Biol. Evol.">
        <title>Molecular evolutionary analyses of the odorant-binding protein gene Gp-9 in fire ants and other Solenopsis species.</title>
        <authorList>
            <person name="Krieger M.J.B."/>
            <person name="Ross K.G."/>
        </authorList>
    </citation>
    <scope>NUCLEOTIDE SEQUENCE [GENOMIC DNA] (ALLELE B2)</scope>
</reference>
<reference evidence="12" key="3">
    <citation type="journal article" date="2007" name="PLoS ONE">
        <title>Molecular variation at a candidate gene implicated in the regulation of fire ant social behavior.</title>
        <authorList>
            <person name="Gotzek D."/>
            <person name="Shoemaker D.D."/>
            <person name="Ross K.G."/>
        </authorList>
    </citation>
    <scope>NUCLEOTIDE SEQUENCE [GENOMIC DNA]</scope>
    <source>
        <strain evidence="11">Pu-100</strain>
        <strain evidence="13">Pu-59m</strain>
        <strain evidence="12">Pu-60m</strain>
    </source>
</reference>
<dbReference type="EMBL" id="AF427896">
    <property type="protein sequence ID" value="AAL51122.1"/>
    <property type="molecule type" value="Genomic_DNA"/>
</dbReference>
<dbReference type="EMBL" id="AF427902">
    <property type="protein sequence ID" value="AAL51128.1"/>
    <property type="molecule type" value="Genomic_DNA"/>
</dbReference>
<dbReference type="EMBL" id="AY818633">
    <property type="protein sequence ID" value="AAW80700.1"/>
    <property type="molecule type" value="Genomic_DNA"/>
</dbReference>
<dbReference type="EMBL" id="EU220042">
    <property type="protein sequence ID" value="ABX25621.1"/>
    <property type="molecule type" value="Genomic_DNA"/>
</dbReference>
<dbReference type="EMBL" id="EU220043">
    <property type="protein sequence ID" value="ABX25622.1"/>
    <property type="molecule type" value="Genomic_DNA"/>
</dbReference>
<dbReference type="EMBL" id="EU220044">
    <property type="protein sequence ID" value="ABX25623.1"/>
    <property type="molecule type" value="Genomic_DNA"/>
</dbReference>
<dbReference type="SMR" id="A9LKE4"/>
<dbReference type="GO" id="GO:0005615">
    <property type="term" value="C:extracellular space"/>
    <property type="evidence" value="ECO:0000250"/>
    <property type="project" value="UniProtKB"/>
</dbReference>
<dbReference type="GO" id="GO:0005550">
    <property type="term" value="F:pheromone binding"/>
    <property type="evidence" value="ECO:0007669"/>
    <property type="project" value="UniProtKB-KW"/>
</dbReference>
<dbReference type="GO" id="GO:0019236">
    <property type="term" value="P:response to pheromone"/>
    <property type="evidence" value="ECO:0007669"/>
    <property type="project" value="UniProtKB-KW"/>
</dbReference>
<dbReference type="GO" id="GO:0035176">
    <property type="term" value="P:social behavior"/>
    <property type="evidence" value="ECO:0000250"/>
    <property type="project" value="UniProtKB"/>
</dbReference>
<dbReference type="CDD" id="cd23992">
    <property type="entry name" value="PBP_GOBP"/>
    <property type="match status" value="1"/>
</dbReference>
<dbReference type="FunFam" id="1.10.238.20:FF:000004">
    <property type="entry name" value="Pheromone-binding protein Gp-9"/>
    <property type="match status" value="1"/>
</dbReference>
<dbReference type="Gene3D" id="1.10.238.20">
    <property type="entry name" value="Pheromone/general odorant binding protein domain"/>
    <property type="match status" value="1"/>
</dbReference>
<dbReference type="InterPro" id="IPR006170">
    <property type="entry name" value="PBP/GOBP"/>
</dbReference>
<dbReference type="InterPro" id="IPR036728">
    <property type="entry name" value="PBP_GOBP_sf"/>
</dbReference>
<dbReference type="InterPro" id="IPR022354">
    <property type="entry name" value="Pheromone-bd_protein_Gp-9"/>
</dbReference>
<dbReference type="Pfam" id="PF01395">
    <property type="entry name" value="PBP_GOBP"/>
    <property type="match status" value="1"/>
</dbReference>
<dbReference type="PRINTS" id="PR02007">
    <property type="entry name" value="ODORANTBPGP9"/>
</dbReference>
<dbReference type="SUPFAM" id="SSF47565">
    <property type="entry name" value="Insect pheromone/odorant-binding proteins"/>
    <property type="match status" value="1"/>
</dbReference>
<gene>
    <name evidence="12" type="primary">Gp-9</name>
</gene>
<feature type="signal peptide" evidence="3">
    <location>
        <begin position="1"/>
        <end position="19"/>
    </location>
</feature>
<feature type="chain" id="PRO_5000061692" description="Pheromone-binding protein Gp-9" evidence="3">
    <location>
        <begin position="20"/>
        <end position="153"/>
    </location>
</feature>
<feature type="disulfide bond" evidence="2">
    <location>
        <begin position="37"/>
        <end position="77"/>
    </location>
</feature>
<feature type="disulfide bond" evidence="2">
    <location>
        <begin position="73"/>
        <end position="129"/>
    </location>
</feature>
<feature type="disulfide bond" evidence="2">
    <location>
        <begin position="118"/>
        <end position="138"/>
    </location>
</feature>
<feature type="sequence variant" description="In strain: Pu-60m." evidence="7">
    <original>R</original>
    <variation>K</variation>
    <location>
        <position position="25"/>
    </location>
</feature>
<feature type="sequence variant" description="In allele b'." evidence="5">
    <original>A</original>
    <variation>T</variation>
    <location>
        <position position="39"/>
    </location>
</feature>
<feature type="sequence variant" description="In allele b'." evidence="5">
    <original>S</original>
    <variation>G</variation>
    <location>
        <position position="42"/>
    </location>
</feature>
<feature type="sequence variant" description="In allele b'." evidence="5">
    <original>M</original>
    <variation>I</variation>
    <location>
        <position position="95"/>
    </location>
</feature>
<feature type="sequence variant" description="In strain: Pu-60m." evidence="7">
    <original>Q</original>
    <variation>H</variation>
    <location>
        <position position="120"/>
    </location>
</feature>
<feature type="sequence variant" description="In allele b'." evidence="5">
    <original>V</original>
    <variation>A</variation>
    <location>
        <position position="136"/>
    </location>
</feature>
<feature type="sequence variant" description="In allele b'." evidence="5">
    <original>V</original>
    <variation>I</variation>
    <location>
        <position position="139"/>
    </location>
</feature>
<feature type="sequence variant" description="In allele b'." evidence="5">
    <original>D</original>
    <variation>N</variation>
    <location>
        <position position="148"/>
    </location>
</feature>
<feature type="sequence variant" description="In allele b'." evidence="5">
    <original>G</original>
    <variation>A</variation>
    <location>
        <position position="152"/>
    </location>
</feature>
<accession>A9LKE4</accession>
<accession>A9LKE3</accession>
<accession>Q7KF14</accession>
<accession>Q8WRQ0</accession>
<comment type="function">
    <text evidence="3">Colony queen number, a major feature of social organization, is associated with worker genotype for Gp-9. Colonies are headed by either a single reproductive queen (monogyne form) or multiple queens (polygyne form). Differences in worker Gp-9 genotypes between social forms may cause differences in workers' abilities to recognize queens and regulate their numbers (By similarity).</text>
</comment>
<comment type="subunit">
    <text evidence="2">Homodimer.</text>
</comment>
<comment type="subcellular location">
    <subcellularLocation>
        <location evidence="1">Secreted</location>
    </subcellularLocation>
</comment>
<comment type="polymorphism">
    <text evidence="5 6">Allele B is shown, polygyne population from Argentina and allele B2, a monogyne population from Argentina.</text>
</comment>
<comment type="similarity">
    <text evidence="4">Belongs to the PBP/GOBP family.</text>
</comment>
<protein>
    <recommendedName>
        <fullName>Pheromone-binding protein Gp-9</fullName>
        <shortName>PBP</shortName>
    </recommendedName>
    <alternativeName>
        <fullName>Putative odorant-binding protein Gp-9</fullName>
    </alternativeName>
</protein>
<proteinExistence type="inferred from homology"/>
<sequence>MKTFVLHIFIFALVAFASASRDSARKIGSQYDNYATCLAEHSLTEDDIFSIGEVSSGQHKTNHEDTELHKNGCVMQCLLEKDGLMSGADYDEEKMREDYIKETGAQPGDQRIEALNACMQETKDMEDKCDKSLLLVACVLAAEAVLADSNEGA</sequence>
<organism>
    <name type="scientific">Solenopsis quinquecuspis</name>
    <name type="common">Fire ant</name>
    <dbReference type="NCBI Taxonomy" id="176596"/>
    <lineage>
        <taxon>Eukaryota</taxon>
        <taxon>Metazoa</taxon>
        <taxon>Ecdysozoa</taxon>
        <taxon>Arthropoda</taxon>
        <taxon>Hexapoda</taxon>
        <taxon>Insecta</taxon>
        <taxon>Pterygota</taxon>
        <taxon>Neoptera</taxon>
        <taxon>Endopterygota</taxon>
        <taxon>Hymenoptera</taxon>
        <taxon>Apocrita</taxon>
        <taxon>Aculeata</taxon>
        <taxon>Formicoidea</taxon>
        <taxon>Formicidae</taxon>
        <taxon>Myrmicinae</taxon>
        <taxon>Solenopsis</taxon>
    </lineage>
</organism>
<keyword id="KW-0085">Behavior</keyword>
<keyword id="KW-1015">Disulfide bond</keyword>
<keyword id="KW-0589">Pheromone response</keyword>
<keyword id="KW-0590">Pheromone-binding</keyword>
<keyword id="KW-0964">Secreted</keyword>
<keyword id="KW-0732">Signal</keyword>
<keyword id="KW-0813">Transport</keyword>
<name>PBGP9_SOLQU</name>
<evidence type="ECO:0000250" key="1"/>
<evidence type="ECO:0000250" key="2">
    <source>
        <dbReference type="UniProtKB" id="P20797"/>
    </source>
</evidence>
<evidence type="ECO:0000250" key="3">
    <source>
        <dbReference type="UniProtKB" id="Q8WP90"/>
    </source>
</evidence>
<evidence type="ECO:0000255" key="4"/>
<evidence type="ECO:0000269" key="5">
    <source>
    </source>
</evidence>
<evidence type="ECO:0000269" key="6">
    <source>
    </source>
</evidence>
<evidence type="ECO:0000269" key="7">
    <source>
    </source>
</evidence>
<evidence type="ECO:0000305" key="8"/>
<evidence type="ECO:0000312" key="9">
    <source>
        <dbReference type="EMBL" id="AAL51122.1"/>
    </source>
</evidence>
<evidence type="ECO:0000312" key="10">
    <source>
        <dbReference type="EMBL" id="AAW80700.1"/>
    </source>
</evidence>
<evidence type="ECO:0000312" key="11">
    <source>
        <dbReference type="EMBL" id="ABX25621.1"/>
    </source>
</evidence>
<evidence type="ECO:0000312" key="12">
    <source>
        <dbReference type="EMBL" id="ABX25622.1"/>
    </source>
</evidence>
<evidence type="ECO:0000312" key="13">
    <source>
        <dbReference type="EMBL" id="ABX25623.1"/>
    </source>
</evidence>